<proteinExistence type="inferred from homology"/>
<evidence type="ECO:0000255" key="1">
    <source>
        <dbReference type="HAMAP-Rule" id="MF_01635"/>
    </source>
</evidence>
<keyword id="KW-0997">Cell inner membrane</keyword>
<keyword id="KW-1003">Cell membrane</keyword>
<keyword id="KW-0460">Magnesium</keyword>
<keyword id="KW-0472">Membrane</keyword>
<keyword id="KW-1185">Reference proteome</keyword>
<keyword id="KW-0808">Transferase</keyword>
<keyword id="KW-0812">Transmembrane</keyword>
<keyword id="KW-1133">Transmembrane helix</keyword>
<keyword id="KW-0831">Ubiquinone biosynthesis</keyword>
<dbReference type="EC" id="2.5.1.39" evidence="1"/>
<dbReference type="EMBL" id="CP000606">
    <property type="protein sequence ID" value="ABO25250.1"/>
    <property type="molecule type" value="Genomic_DNA"/>
</dbReference>
<dbReference type="RefSeq" id="WP_011867180.1">
    <property type="nucleotide sequence ID" value="NC_009092.1"/>
</dbReference>
<dbReference type="SMR" id="A3QIF2"/>
<dbReference type="STRING" id="323850.Shew_3384"/>
<dbReference type="KEGG" id="slo:Shew_3384"/>
<dbReference type="eggNOG" id="COG0382">
    <property type="taxonomic scope" value="Bacteria"/>
</dbReference>
<dbReference type="HOGENOM" id="CLU_034879_1_0_6"/>
<dbReference type="OrthoDB" id="9782418at2"/>
<dbReference type="UniPathway" id="UPA00232"/>
<dbReference type="Proteomes" id="UP000001558">
    <property type="component" value="Chromosome"/>
</dbReference>
<dbReference type="GO" id="GO:0005886">
    <property type="term" value="C:plasma membrane"/>
    <property type="evidence" value="ECO:0007669"/>
    <property type="project" value="UniProtKB-SubCell"/>
</dbReference>
<dbReference type="GO" id="GO:0008412">
    <property type="term" value="F:4-hydroxybenzoate polyprenyltransferase activity"/>
    <property type="evidence" value="ECO:0007669"/>
    <property type="project" value="UniProtKB-UniRule"/>
</dbReference>
<dbReference type="GO" id="GO:0006744">
    <property type="term" value="P:ubiquinone biosynthetic process"/>
    <property type="evidence" value="ECO:0007669"/>
    <property type="project" value="UniProtKB-UniRule"/>
</dbReference>
<dbReference type="CDD" id="cd13959">
    <property type="entry name" value="PT_UbiA_COQ2"/>
    <property type="match status" value="1"/>
</dbReference>
<dbReference type="FunFam" id="1.10.357.140:FF:000002">
    <property type="entry name" value="4-hydroxybenzoate octaprenyltransferase"/>
    <property type="match status" value="1"/>
</dbReference>
<dbReference type="FunFam" id="1.20.120.1780:FF:000001">
    <property type="entry name" value="4-hydroxybenzoate octaprenyltransferase"/>
    <property type="match status" value="1"/>
</dbReference>
<dbReference type="Gene3D" id="1.10.357.140">
    <property type="entry name" value="UbiA prenyltransferase"/>
    <property type="match status" value="1"/>
</dbReference>
<dbReference type="Gene3D" id="1.20.120.1780">
    <property type="entry name" value="UbiA prenyltransferase"/>
    <property type="match status" value="1"/>
</dbReference>
<dbReference type="HAMAP" id="MF_01635">
    <property type="entry name" value="UbiA"/>
    <property type="match status" value="1"/>
</dbReference>
<dbReference type="InterPro" id="IPR006370">
    <property type="entry name" value="HB_polyprenyltransferase-like"/>
</dbReference>
<dbReference type="InterPro" id="IPR039653">
    <property type="entry name" value="Prenyltransferase"/>
</dbReference>
<dbReference type="InterPro" id="IPR000537">
    <property type="entry name" value="UbiA_prenyltransferase"/>
</dbReference>
<dbReference type="InterPro" id="IPR030470">
    <property type="entry name" value="UbiA_prenylTrfase_CS"/>
</dbReference>
<dbReference type="InterPro" id="IPR044878">
    <property type="entry name" value="UbiA_sf"/>
</dbReference>
<dbReference type="NCBIfam" id="TIGR01474">
    <property type="entry name" value="ubiA_proteo"/>
    <property type="match status" value="1"/>
</dbReference>
<dbReference type="PANTHER" id="PTHR11048:SF28">
    <property type="entry name" value="4-HYDROXYBENZOATE POLYPRENYLTRANSFERASE, MITOCHONDRIAL"/>
    <property type="match status" value="1"/>
</dbReference>
<dbReference type="PANTHER" id="PTHR11048">
    <property type="entry name" value="PRENYLTRANSFERASES"/>
    <property type="match status" value="1"/>
</dbReference>
<dbReference type="Pfam" id="PF01040">
    <property type="entry name" value="UbiA"/>
    <property type="match status" value="1"/>
</dbReference>
<dbReference type="PROSITE" id="PS00943">
    <property type="entry name" value="UBIA"/>
    <property type="match status" value="1"/>
</dbReference>
<comment type="function">
    <text evidence="1">Catalyzes the prenylation of para-hydroxybenzoate (PHB) with an all-trans polyprenyl group. Mediates the second step in the final reaction sequence of ubiquinone-8 (UQ-8) biosynthesis, which is the condensation of the polyisoprenoid side chain with PHB, generating the first membrane-bound Q intermediate 3-octaprenyl-4-hydroxybenzoate.</text>
</comment>
<comment type="catalytic activity">
    <reaction evidence="1">
        <text>all-trans-octaprenyl diphosphate + 4-hydroxybenzoate = 4-hydroxy-3-(all-trans-octaprenyl)benzoate + diphosphate</text>
        <dbReference type="Rhea" id="RHEA:27782"/>
        <dbReference type="ChEBI" id="CHEBI:1617"/>
        <dbReference type="ChEBI" id="CHEBI:17879"/>
        <dbReference type="ChEBI" id="CHEBI:33019"/>
        <dbReference type="ChEBI" id="CHEBI:57711"/>
        <dbReference type="EC" id="2.5.1.39"/>
    </reaction>
</comment>
<comment type="cofactor">
    <cofactor evidence="1">
        <name>Mg(2+)</name>
        <dbReference type="ChEBI" id="CHEBI:18420"/>
    </cofactor>
</comment>
<comment type="pathway">
    <text evidence="1">Cofactor biosynthesis; ubiquinone biosynthesis.</text>
</comment>
<comment type="subcellular location">
    <subcellularLocation>
        <location evidence="1">Cell inner membrane</location>
        <topology evidence="1">Multi-pass membrane protein</topology>
    </subcellularLocation>
</comment>
<comment type="similarity">
    <text evidence="1">Belongs to the UbiA prenyltransferase family.</text>
</comment>
<sequence length="286" mass="31943">MSLRDKLDAYLRLARMDRPIGTFLLLWPCLMALVLAAGGMPDLKVLIIFVIGVVVMRACGCIINDYADRKLDSHVERTKSRPLASGEVTVKEALILFVVMGLLAFGLVLMLNPLVVQLSFVGIILTIIYPFTKRFTNMPQMFLGVVWSWSIPMAYAAQLGTVPVEAWWLFAANWCWTVAYDTMYAMVDRDDDLKVGIKSTAILFGRFDRQIIGLFQLAALGCFIMAGLSADRGLVFALGILTFIGFGLYQQKLIFDRERAPCLQAFLNNNWAGMVLFVTLGADYLI</sequence>
<feature type="chain" id="PRO_1000069834" description="4-hydroxybenzoate octaprenyltransferase">
    <location>
        <begin position="1"/>
        <end position="286"/>
    </location>
</feature>
<feature type="transmembrane region" description="Helical" evidence="1">
    <location>
        <begin position="20"/>
        <end position="40"/>
    </location>
</feature>
<feature type="transmembrane region" description="Helical" evidence="1">
    <location>
        <begin position="43"/>
        <end position="63"/>
    </location>
</feature>
<feature type="transmembrane region" description="Helical" evidence="1">
    <location>
        <begin position="95"/>
        <end position="115"/>
    </location>
</feature>
<feature type="transmembrane region" description="Helical" evidence="1">
    <location>
        <begin position="116"/>
        <end position="136"/>
    </location>
</feature>
<feature type="transmembrane region" description="Helical" evidence="1">
    <location>
        <begin position="142"/>
        <end position="162"/>
    </location>
</feature>
<feature type="transmembrane region" description="Helical" evidence="1">
    <location>
        <begin position="167"/>
        <end position="187"/>
    </location>
</feature>
<feature type="transmembrane region" description="Helical" evidence="1">
    <location>
        <begin position="210"/>
        <end position="230"/>
    </location>
</feature>
<feature type="transmembrane region" description="Helical" evidence="1">
    <location>
        <begin position="235"/>
        <end position="255"/>
    </location>
</feature>
<name>UBIA_SHELP</name>
<organism>
    <name type="scientific">Shewanella loihica (strain ATCC BAA-1088 / PV-4)</name>
    <dbReference type="NCBI Taxonomy" id="323850"/>
    <lineage>
        <taxon>Bacteria</taxon>
        <taxon>Pseudomonadati</taxon>
        <taxon>Pseudomonadota</taxon>
        <taxon>Gammaproteobacteria</taxon>
        <taxon>Alteromonadales</taxon>
        <taxon>Shewanellaceae</taxon>
        <taxon>Shewanella</taxon>
    </lineage>
</organism>
<protein>
    <recommendedName>
        <fullName evidence="1">4-hydroxybenzoate octaprenyltransferase</fullName>
        <ecNumber evidence="1">2.5.1.39</ecNumber>
    </recommendedName>
    <alternativeName>
        <fullName evidence="1">4-HB polyprenyltransferase</fullName>
    </alternativeName>
</protein>
<gene>
    <name evidence="1" type="primary">ubiA</name>
    <name type="ordered locus">Shew_3384</name>
</gene>
<reference key="1">
    <citation type="submission" date="2007-03" db="EMBL/GenBank/DDBJ databases">
        <title>Complete sequence of Shewanella loihica PV-4.</title>
        <authorList>
            <consortium name="US DOE Joint Genome Institute"/>
            <person name="Copeland A."/>
            <person name="Lucas S."/>
            <person name="Lapidus A."/>
            <person name="Barry K."/>
            <person name="Detter J.C."/>
            <person name="Glavina del Rio T."/>
            <person name="Hammon N."/>
            <person name="Israni S."/>
            <person name="Dalin E."/>
            <person name="Tice H."/>
            <person name="Pitluck S."/>
            <person name="Chain P."/>
            <person name="Malfatti S."/>
            <person name="Shin M."/>
            <person name="Vergez L."/>
            <person name="Schmutz J."/>
            <person name="Larimer F."/>
            <person name="Land M."/>
            <person name="Hauser L."/>
            <person name="Kyrpides N."/>
            <person name="Mikhailova N."/>
            <person name="Romine M.F."/>
            <person name="Serres G."/>
            <person name="Fredrickson J."/>
            <person name="Tiedje J."/>
            <person name="Richardson P."/>
        </authorList>
    </citation>
    <scope>NUCLEOTIDE SEQUENCE [LARGE SCALE GENOMIC DNA]</scope>
    <source>
        <strain>ATCC BAA-1088 / PV-4</strain>
    </source>
</reference>
<accession>A3QIF2</accession>